<organism>
    <name type="scientific">Bacillus pumilus (strain SAFR-032)</name>
    <dbReference type="NCBI Taxonomy" id="315750"/>
    <lineage>
        <taxon>Bacteria</taxon>
        <taxon>Bacillati</taxon>
        <taxon>Bacillota</taxon>
        <taxon>Bacilli</taxon>
        <taxon>Bacillales</taxon>
        <taxon>Bacillaceae</taxon>
        <taxon>Bacillus</taxon>
    </lineage>
</organism>
<evidence type="ECO:0000255" key="1">
    <source>
        <dbReference type="HAMAP-Rule" id="MF_01864"/>
    </source>
</evidence>
<evidence type="ECO:0000255" key="2">
    <source>
        <dbReference type="PROSITE-ProRule" id="PRU01266"/>
    </source>
</evidence>
<evidence type="ECO:0000256" key="3">
    <source>
        <dbReference type="SAM" id="MobiDB-lite"/>
    </source>
</evidence>
<feature type="chain" id="PRO_0000374136" description="tRNA-2-methylthio-N(6)-dimethylallyladenosine synthase">
    <location>
        <begin position="1"/>
        <end position="508"/>
    </location>
</feature>
<feature type="domain" description="MTTase N-terminal" evidence="1">
    <location>
        <begin position="65"/>
        <end position="183"/>
    </location>
</feature>
<feature type="domain" description="Radical SAM core" evidence="2">
    <location>
        <begin position="206"/>
        <end position="436"/>
    </location>
</feature>
<feature type="domain" description="TRAM" evidence="1">
    <location>
        <begin position="439"/>
        <end position="502"/>
    </location>
</feature>
<feature type="region of interest" description="Disordered" evidence="3">
    <location>
        <begin position="1"/>
        <end position="21"/>
    </location>
</feature>
<feature type="binding site" evidence="1">
    <location>
        <position position="74"/>
    </location>
    <ligand>
        <name>[4Fe-4S] cluster</name>
        <dbReference type="ChEBI" id="CHEBI:49883"/>
        <label>1</label>
    </ligand>
</feature>
<feature type="binding site" evidence="1">
    <location>
        <position position="110"/>
    </location>
    <ligand>
        <name>[4Fe-4S] cluster</name>
        <dbReference type="ChEBI" id="CHEBI:49883"/>
        <label>1</label>
    </ligand>
</feature>
<feature type="binding site" evidence="1">
    <location>
        <position position="144"/>
    </location>
    <ligand>
        <name>[4Fe-4S] cluster</name>
        <dbReference type="ChEBI" id="CHEBI:49883"/>
        <label>1</label>
    </ligand>
</feature>
<feature type="binding site" evidence="1">
    <location>
        <position position="220"/>
    </location>
    <ligand>
        <name>[4Fe-4S] cluster</name>
        <dbReference type="ChEBI" id="CHEBI:49883"/>
        <label>2</label>
        <note>4Fe-4S-S-AdoMet</note>
    </ligand>
</feature>
<feature type="binding site" evidence="1">
    <location>
        <position position="224"/>
    </location>
    <ligand>
        <name>[4Fe-4S] cluster</name>
        <dbReference type="ChEBI" id="CHEBI:49883"/>
        <label>2</label>
        <note>4Fe-4S-S-AdoMet</note>
    </ligand>
</feature>
<feature type="binding site" evidence="1">
    <location>
        <position position="227"/>
    </location>
    <ligand>
        <name>[4Fe-4S] cluster</name>
        <dbReference type="ChEBI" id="CHEBI:49883"/>
        <label>2</label>
        <note>4Fe-4S-S-AdoMet</note>
    </ligand>
</feature>
<accession>A8FDH0</accession>
<name>MIAB_BACP2</name>
<comment type="function">
    <text evidence="1">Catalyzes the methylthiolation of N6-(dimethylallyl)adenosine (i(6)A), leading to the formation of 2-methylthio-N6-(dimethylallyl)adenosine (ms(2)i(6)A) at position 37 in tRNAs that read codons beginning with uridine.</text>
</comment>
<comment type="catalytic activity">
    <reaction evidence="1">
        <text>N(6)-dimethylallyladenosine(37) in tRNA + (sulfur carrier)-SH + AH2 + 2 S-adenosyl-L-methionine = 2-methylsulfanyl-N(6)-dimethylallyladenosine(37) in tRNA + (sulfur carrier)-H + 5'-deoxyadenosine + L-methionine + A + S-adenosyl-L-homocysteine + 2 H(+)</text>
        <dbReference type="Rhea" id="RHEA:37067"/>
        <dbReference type="Rhea" id="RHEA-COMP:10375"/>
        <dbReference type="Rhea" id="RHEA-COMP:10376"/>
        <dbReference type="Rhea" id="RHEA-COMP:14737"/>
        <dbReference type="Rhea" id="RHEA-COMP:14739"/>
        <dbReference type="ChEBI" id="CHEBI:13193"/>
        <dbReference type="ChEBI" id="CHEBI:15378"/>
        <dbReference type="ChEBI" id="CHEBI:17319"/>
        <dbReference type="ChEBI" id="CHEBI:17499"/>
        <dbReference type="ChEBI" id="CHEBI:29917"/>
        <dbReference type="ChEBI" id="CHEBI:57844"/>
        <dbReference type="ChEBI" id="CHEBI:57856"/>
        <dbReference type="ChEBI" id="CHEBI:59789"/>
        <dbReference type="ChEBI" id="CHEBI:64428"/>
        <dbReference type="ChEBI" id="CHEBI:74415"/>
        <dbReference type="ChEBI" id="CHEBI:74417"/>
        <dbReference type="EC" id="2.8.4.3"/>
    </reaction>
</comment>
<comment type="cofactor">
    <cofactor evidence="1">
        <name>[4Fe-4S] cluster</name>
        <dbReference type="ChEBI" id="CHEBI:49883"/>
    </cofactor>
    <text evidence="1">Binds 2 [4Fe-4S] clusters. One cluster is coordinated with 3 cysteines and an exchangeable S-adenosyl-L-methionine.</text>
</comment>
<comment type="subunit">
    <text evidence="1">Monomer.</text>
</comment>
<comment type="subcellular location">
    <subcellularLocation>
        <location evidence="1">Cytoplasm</location>
    </subcellularLocation>
</comment>
<comment type="similarity">
    <text evidence="1">Belongs to the methylthiotransferase family. MiaB subfamily.</text>
</comment>
<gene>
    <name evidence="1" type="primary">miaB</name>
    <name type="ordered locus">BPUM_1605</name>
</gene>
<dbReference type="EC" id="2.8.4.3" evidence="1"/>
<dbReference type="EMBL" id="CP000813">
    <property type="protein sequence ID" value="ABV62287.1"/>
    <property type="molecule type" value="Genomic_DNA"/>
</dbReference>
<dbReference type="RefSeq" id="WP_012010025.1">
    <property type="nucleotide sequence ID" value="NZ_VEIS01000003.1"/>
</dbReference>
<dbReference type="SMR" id="A8FDH0"/>
<dbReference type="STRING" id="315750.BPUM_1605"/>
<dbReference type="GeneID" id="23399398"/>
<dbReference type="KEGG" id="bpu:BPUM_1605"/>
<dbReference type="eggNOG" id="COG0621">
    <property type="taxonomic scope" value="Bacteria"/>
</dbReference>
<dbReference type="HOGENOM" id="CLU_018697_2_0_9"/>
<dbReference type="OrthoDB" id="9805215at2"/>
<dbReference type="Proteomes" id="UP000001355">
    <property type="component" value="Chromosome"/>
</dbReference>
<dbReference type="GO" id="GO:0005829">
    <property type="term" value="C:cytosol"/>
    <property type="evidence" value="ECO:0007669"/>
    <property type="project" value="TreeGrafter"/>
</dbReference>
<dbReference type="GO" id="GO:0051539">
    <property type="term" value="F:4 iron, 4 sulfur cluster binding"/>
    <property type="evidence" value="ECO:0007669"/>
    <property type="project" value="UniProtKB-UniRule"/>
</dbReference>
<dbReference type="GO" id="GO:0046872">
    <property type="term" value="F:metal ion binding"/>
    <property type="evidence" value="ECO:0007669"/>
    <property type="project" value="UniProtKB-KW"/>
</dbReference>
<dbReference type="GO" id="GO:0035597">
    <property type="term" value="F:N6-isopentenyladenosine methylthiotransferase activity"/>
    <property type="evidence" value="ECO:0007669"/>
    <property type="project" value="TreeGrafter"/>
</dbReference>
<dbReference type="CDD" id="cd01335">
    <property type="entry name" value="Radical_SAM"/>
    <property type="match status" value="1"/>
</dbReference>
<dbReference type="FunFam" id="3.40.50.12160:FF:000006">
    <property type="entry name" value="tRNA-2-methylthio-N(6)-dimethylallyladenosine synthase"/>
    <property type="match status" value="1"/>
</dbReference>
<dbReference type="FunFam" id="3.80.30.20:FF:000001">
    <property type="entry name" value="tRNA-2-methylthio-N(6)-dimethylallyladenosine synthase 2"/>
    <property type="match status" value="1"/>
</dbReference>
<dbReference type="Gene3D" id="3.40.50.12160">
    <property type="entry name" value="Methylthiotransferase, N-terminal domain"/>
    <property type="match status" value="1"/>
</dbReference>
<dbReference type="Gene3D" id="3.80.30.20">
    <property type="entry name" value="tm_1862 like domain"/>
    <property type="match status" value="1"/>
</dbReference>
<dbReference type="HAMAP" id="MF_01864">
    <property type="entry name" value="tRNA_metthiotr_MiaB"/>
    <property type="match status" value="1"/>
</dbReference>
<dbReference type="InterPro" id="IPR006638">
    <property type="entry name" value="Elp3/MiaA/NifB-like_rSAM"/>
</dbReference>
<dbReference type="InterPro" id="IPR005839">
    <property type="entry name" value="Methylthiotransferase"/>
</dbReference>
<dbReference type="InterPro" id="IPR020612">
    <property type="entry name" value="Methylthiotransferase_CS"/>
</dbReference>
<dbReference type="InterPro" id="IPR013848">
    <property type="entry name" value="Methylthiotransferase_N"/>
</dbReference>
<dbReference type="InterPro" id="IPR038135">
    <property type="entry name" value="Methylthiotransferase_N_sf"/>
</dbReference>
<dbReference type="InterPro" id="IPR006463">
    <property type="entry name" value="MiaB_methiolase"/>
</dbReference>
<dbReference type="InterPro" id="IPR007197">
    <property type="entry name" value="rSAM"/>
</dbReference>
<dbReference type="InterPro" id="IPR023404">
    <property type="entry name" value="rSAM_horseshoe"/>
</dbReference>
<dbReference type="InterPro" id="IPR002792">
    <property type="entry name" value="TRAM_dom"/>
</dbReference>
<dbReference type="NCBIfam" id="TIGR01574">
    <property type="entry name" value="miaB-methiolase"/>
    <property type="match status" value="1"/>
</dbReference>
<dbReference type="NCBIfam" id="TIGR00089">
    <property type="entry name" value="MiaB/RimO family radical SAM methylthiotransferase"/>
    <property type="match status" value="1"/>
</dbReference>
<dbReference type="PANTHER" id="PTHR43020">
    <property type="entry name" value="CDK5 REGULATORY SUBUNIT-ASSOCIATED PROTEIN 1"/>
    <property type="match status" value="1"/>
</dbReference>
<dbReference type="PANTHER" id="PTHR43020:SF2">
    <property type="entry name" value="MITOCHONDRIAL TRNA METHYLTHIOTRANSFERASE CDK5RAP1"/>
    <property type="match status" value="1"/>
</dbReference>
<dbReference type="Pfam" id="PF04055">
    <property type="entry name" value="Radical_SAM"/>
    <property type="match status" value="1"/>
</dbReference>
<dbReference type="Pfam" id="PF01938">
    <property type="entry name" value="TRAM"/>
    <property type="match status" value="1"/>
</dbReference>
<dbReference type="Pfam" id="PF00919">
    <property type="entry name" value="UPF0004"/>
    <property type="match status" value="1"/>
</dbReference>
<dbReference type="SFLD" id="SFLDF00273">
    <property type="entry name" value="(dimethylallyl)adenosine_tRNA"/>
    <property type="match status" value="1"/>
</dbReference>
<dbReference type="SFLD" id="SFLDG01082">
    <property type="entry name" value="B12-binding_domain_containing"/>
    <property type="match status" value="1"/>
</dbReference>
<dbReference type="SFLD" id="SFLDG01061">
    <property type="entry name" value="methylthiotransferase"/>
    <property type="match status" value="1"/>
</dbReference>
<dbReference type="SMART" id="SM00729">
    <property type="entry name" value="Elp3"/>
    <property type="match status" value="1"/>
</dbReference>
<dbReference type="SUPFAM" id="SSF102114">
    <property type="entry name" value="Radical SAM enzymes"/>
    <property type="match status" value="1"/>
</dbReference>
<dbReference type="PROSITE" id="PS51449">
    <property type="entry name" value="MTTASE_N"/>
    <property type="match status" value="1"/>
</dbReference>
<dbReference type="PROSITE" id="PS01278">
    <property type="entry name" value="MTTASE_RADICAL"/>
    <property type="match status" value="1"/>
</dbReference>
<dbReference type="PROSITE" id="PS51918">
    <property type="entry name" value="RADICAL_SAM"/>
    <property type="match status" value="1"/>
</dbReference>
<dbReference type="PROSITE" id="PS50926">
    <property type="entry name" value="TRAM"/>
    <property type="match status" value="1"/>
</dbReference>
<keyword id="KW-0004">4Fe-4S</keyword>
<keyword id="KW-0963">Cytoplasm</keyword>
<keyword id="KW-0408">Iron</keyword>
<keyword id="KW-0411">Iron-sulfur</keyword>
<keyword id="KW-0479">Metal-binding</keyword>
<keyword id="KW-0949">S-adenosyl-L-methionine</keyword>
<keyword id="KW-0808">Transferase</keyword>
<keyword id="KW-0819">tRNA processing</keyword>
<sequence>MNEEQRKASGQVSSSDKKSEKDYSQYFEAVYIPPSLKDAKKRGKEEVEYNQFQIDERFQGLGNGRKFYIRTYGCQMNEHDTEVMAGIFMALGYEPTNSTEDANVILLNTCAIRENAENKVFGELGHLKALKREKPDLILGVCGCMSQEESVVNRILKKHPFVDLIFGTHNIHRLPELLSECYLSKEMVIEVWSKEGDVIENLPRARQGKIKGWVNIMYGCDKFCTYCIVPYTRGKERSRRPDEIIQEVRRLAAEGYKEITLLGQNVNAYGKDFEDMEYGLGHLMDELRKIDIPRIRFTTSHPRDFDDHLIEVLAKGGNLLDHIHLPVQSGSSSVLKLMARKYDRERYLDLVRKIKEAMPNASLTTDIIVGFPNETDEQFEETLSLYREVEFDAAYTFIYSPREGTPAAKMQDNVPMHVKKERLQRLNALVNEISAKKMKEYEGQTVEVLVEGESKNNPEILAGYTSKSKLVNFKAPKEAIGNIVKVKITQAKTWSLDGEMVGEAIEVN</sequence>
<reference key="1">
    <citation type="journal article" date="2007" name="PLoS ONE">
        <title>Paradoxical DNA repair and peroxide resistance gene conservation in Bacillus pumilus SAFR-032.</title>
        <authorList>
            <person name="Gioia J."/>
            <person name="Yerrapragada S."/>
            <person name="Qin X."/>
            <person name="Jiang H."/>
            <person name="Igboeli O.C."/>
            <person name="Muzny D."/>
            <person name="Dugan-Rocha S."/>
            <person name="Ding Y."/>
            <person name="Hawes A."/>
            <person name="Liu W."/>
            <person name="Perez L."/>
            <person name="Kovar C."/>
            <person name="Dinh H."/>
            <person name="Lee S."/>
            <person name="Nazareth L."/>
            <person name="Blyth P."/>
            <person name="Holder M."/>
            <person name="Buhay C."/>
            <person name="Tirumalai M.R."/>
            <person name="Liu Y."/>
            <person name="Dasgupta I."/>
            <person name="Bokhetache L."/>
            <person name="Fujita M."/>
            <person name="Karouia F."/>
            <person name="Eswara Moorthy P."/>
            <person name="Siefert J."/>
            <person name="Uzman A."/>
            <person name="Buzumbo P."/>
            <person name="Verma A."/>
            <person name="Zwiya H."/>
            <person name="McWilliams B.D."/>
            <person name="Olowu A."/>
            <person name="Clinkenbeard K.D."/>
            <person name="Newcombe D."/>
            <person name="Golebiewski L."/>
            <person name="Petrosino J.F."/>
            <person name="Nicholson W.L."/>
            <person name="Fox G.E."/>
            <person name="Venkateswaran K."/>
            <person name="Highlander S.K."/>
            <person name="Weinstock G.M."/>
        </authorList>
    </citation>
    <scope>NUCLEOTIDE SEQUENCE [LARGE SCALE GENOMIC DNA]</scope>
    <source>
        <strain>SAFR-032</strain>
    </source>
</reference>
<protein>
    <recommendedName>
        <fullName evidence="1">tRNA-2-methylthio-N(6)-dimethylallyladenosine synthase</fullName>
        <ecNumber evidence="1">2.8.4.3</ecNumber>
    </recommendedName>
    <alternativeName>
        <fullName evidence="1">(Dimethylallyl)adenosine tRNA methylthiotransferase MiaB</fullName>
    </alternativeName>
    <alternativeName>
        <fullName evidence="1">tRNA-i(6)A37 methylthiotransferase</fullName>
    </alternativeName>
</protein>
<proteinExistence type="inferred from homology"/>